<organism>
    <name type="scientific">Escherichia coli O157:H7 (strain EC4115 / EHEC)</name>
    <dbReference type="NCBI Taxonomy" id="444450"/>
    <lineage>
        <taxon>Bacteria</taxon>
        <taxon>Pseudomonadati</taxon>
        <taxon>Pseudomonadota</taxon>
        <taxon>Gammaproteobacteria</taxon>
        <taxon>Enterobacterales</taxon>
        <taxon>Enterobacteriaceae</taxon>
        <taxon>Escherichia</taxon>
    </lineage>
</organism>
<comment type="function">
    <text evidence="1">Catalyzes the isomerization of 5-dehydro-4-deoxy-D-glucuronate to 3-deoxy-D-glycero-2,5-hexodiulosonate.</text>
</comment>
<comment type="catalytic activity">
    <reaction evidence="1">
        <text>5-dehydro-4-deoxy-D-glucuronate = 3-deoxy-D-glycero-2,5-hexodiulosonate</text>
        <dbReference type="Rhea" id="RHEA:23896"/>
        <dbReference type="ChEBI" id="CHEBI:17117"/>
        <dbReference type="ChEBI" id="CHEBI:29071"/>
        <dbReference type="EC" id="5.3.1.17"/>
    </reaction>
</comment>
<comment type="cofactor">
    <cofactor evidence="1">
        <name>Zn(2+)</name>
        <dbReference type="ChEBI" id="CHEBI:29105"/>
    </cofactor>
    <text evidence="1">Binds 1 zinc ion per subunit.</text>
</comment>
<comment type="pathway">
    <text evidence="1">Glycan metabolism; pectin degradation; 2-dehydro-3-deoxy-D-gluconate from pectin: step 4/5.</text>
</comment>
<comment type="subunit">
    <text evidence="1">Homohexamer.</text>
</comment>
<comment type="similarity">
    <text evidence="1">Belongs to the KduI family.</text>
</comment>
<keyword id="KW-0413">Isomerase</keyword>
<keyword id="KW-0479">Metal-binding</keyword>
<keyword id="KW-0862">Zinc</keyword>
<accession>B5Z4G1</accession>
<evidence type="ECO:0000255" key="1">
    <source>
        <dbReference type="HAMAP-Rule" id="MF_00687"/>
    </source>
</evidence>
<dbReference type="EC" id="5.3.1.17" evidence="1"/>
<dbReference type="EMBL" id="CP001164">
    <property type="protein sequence ID" value="ACI38163.1"/>
    <property type="molecule type" value="Genomic_DNA"/>
</dbReference>
<dbReference type="RefSeq" id="WP_000383257.1">
    <property type="nucleotide sequence ID" value="NC_011353.1"/>
</dbReference>
<dbReference type="SMR" id="B5Z4G1"/>
<dbReference type="KEGG" id="ecf:ECH74115_4112"/>
<dbReference type="HOGENOM" id="CLU_062609_0_0_6"/>
<dbReference type="UniPathway" id="UPA00545">
    <property type="reaction ID" value="UER00826"/>
</dbReference>
<dbReference type="GO" id="GO:0008697">
    <property type="term" value="F:4-deoxy-L-threo-5-hexosulose-uronate ketol-isomerase activity"/>
    <property type="evidence" value="ECO:0007669"/>
    <property type="project" value="UniProtKB-UniRule"/>
</dbReference>
<dbReference type="GO" id="GO:0008270">
    <property type="term" value="F:zinc ion binding"/>
    <property type="evidence" value="ECO:0007669"/>
    <property type="project" value="UniProtKB-UniRule"/>
</dbReference>
<dbReference type="GO" id="GO:0019698">
    <property type="term" value="P:D-galacturonate catabolic process"/>
    <property type="evidence" value="ECO:0007669"/>
    <property type="project" value="TreeGrafter"/>
</dbReference>
<dbReference type="GO" id="GO:0042840">
    <property type="term" value="P:D-glucuronate catabolic process"/>
    <property type="evidence" value="ECO:0007669"/>
    <property type="project" value="TreeGrafter"/>
</dbReference>
<dbReference type="GO" id="GO:0045490">
    <property type="term" value="P:pectin catabolic process"/>
    <property type="evidence" value="ECO:0007669"/>
    <property type="project" value="UniProtKB-UniRule"/>
</dbReference>
<dbReference type="CDD" id="cd20491">
    <property type="entry name" value="cupin_KduI_C"/>
    <property type="match status" value="1"/>
</dbReference>
<dbReference type="CDD" id="cd20294">
    <property type="entry name" value="cupin_KduI_N"/>
    <property type="match status" value="1"/>
</dbReference>
<dbReference type="FunFam" id="2.60.120.10:FF:000018">
    <property type="entry name" value="4-deoxy-L-threo-5-hexosulose-uronate ketol-isomerase"/>
    <property type="match status" value="1"/>
</dbReference>
<dbReference type="FunFam" id="2.60.120.520:FF:000001">
    <property type="entry name" value="4-deoxy-L-threo-5-hexosulose-uronate ketol-isomerase"/>
    <property type="match status" value="1"/>
</dbReference>
<dbReference type="Gene3D" id="2.60.120.10">
    <property type="entry name" value="Jelly Rolls"/>
    <property type="match status" value="1"/>
</dbReference>
<dbReference type="Gene3D" id="2.60.120.520">
    <property type="entry name" value="pectin degrading enzyme 5-keto 4- deoxyuronate isomerase, domain 1"/>
    <property type="match status" value="1"/>
</dbReference>
<dbReference type="HAMAP" id="MF_00687">
    <property type="entry name" value="KduI"/>
    <property type="match status" value="1"/>
</dbReference>
<dbReference type="InterPro" id="IPR007045">
    <property type="entry name" value="KduI"/>
</dbReference>
<dbReference type="InterPro" id="IPR021120">
    <property type="entry name" value="KduI/IolB_isomerase"/>
</dbReference>
<dbReference type="InterPro" id="IPR027449">
    <property type="entry name" value="KduI_N"/>
</dbReference>
<dbReference type="InterPro" id="IPR014710">
    <property type="entry name" value="RmlC-like_jellyroll"/>
</dbReference>
<dbReference type="InterPro" id="IPR011051">
    <property type="entry name" value="RmlC_Cupin_sf"/>
</dbReference>
<dbReference type="NCBIfam" id="NF002091">
    <property type="entry name" value="PRK00924.1"/>
    <property type="match status" value="1"/>
</dbReference>
<dbReference type="PANTHER" id="PTHR38461">
    <property type="entry name" value="4-DEOXY-L-THREO-5-HEXOSULOSE-URONATE KETOL-ISOMERASE"/>
    <property type="match status" value="1"/>
</dbReference>
<dbReference type="PANTHER" id="PTHR38461:SF1">
    <property type="entry name" value="4-DEOXY-L-THREO-5-HEXOSULOSE-URONATE KETOL-ISOMERASE"/>
    <property type="match status" value="1"/>
</dbReference>
<dbReference type="Pfam" id="PF04962">
    <property type="entry name" value="KduI"/>
    <property type="match status" value="1"/>
</dbReference>
<dbReference type="PIRSF" id="PIRSF006625">
    <property type="entry name" value="KduI"/>
    <property type="match status" value="1"/>
</dbReference>
<dbReference type="SUPFAM" id="SSF51182">
    <property type="entry name" value="RmlC-like cupins"/>
    <property type="match status" value="1"/>
</dbReference>
<protein>
    <recommendedName>
        <fullName evidence="1">4-deoxy-L-threo-5-hexosulose-uronate ketol-isomerase</fullName>
        <ecNumber evidence="1">5.3.1.17</ecNumber>
    </recommendedName>
    <alternativeName>
        <fullName evidence="1">5-keto-4-deoxyuronate isomerase</fullName>
    </alternativeName>
    <alternativeName>
        <fullName evidence="1">DKI isomerase</fullName>
    </alternativeName>
</protein>
<proteinExistence type="inferred from homology"/>
<gene>
    <name evidence="1" type="primary">kduI</name>
    <name type="ordered locus">ECH74115_4112</name>
</gene>
<reference key="1">
    <citation type="journal article" date="2011" name="Proc. Natl. Acad. Sci. U.S.A.">
        <title>Genomic anatomy of Escherichia coli O157:H7 outbreaks.</title>
        <authorList>
            <person name="Eppinger M."/>
            <person name="Mammel M.K."/>
            <person name="Leclerc J.E."/>
            <person name="Ravel J."/>
            <person name="Cebula T.A."/>
        </authorList>
    </citation>
    <scope>NUCLEOTIDE SEQUENCE [LARGE SCALE GENOMIC DNA]</scope>
    <source>
        <strain>EC4115 / EHEC</strain>
    </source>
</reference>
<feature type="chain" id="PRO_1000131879" description="4-deoxy-L-threo-5-hexosulose-uronate ketol-isomerase">
    <location>
        <begin position="1"/>
        <end position="278"/>
    </location>
</feature>
<feature type="binding site" evidence="1">
    <location>
        <position position="196"/>
    </location>
    <ligand>
        <name>Zn(2+)</name>
        <dbReference type="ChEBI" id="CHEBI:29105"/>
    </ligand>
</feature>
<feature type="binding site" evidence="1">
    <location>
        <position position="198"/>
    </location>
    <ligand>
        <name>Zn(2+)</name>
        <dbReference type="ChEBI" id="CHEBI:29105"/>
    </ligand>
</feature>
<feature type="binding site" evidence="1">
    <location>
        <position position="203"/>
    </location>
    <ligand>
        <name>Zn(2+)</name>
        <dbReference type="ChEBI" id="CHEBI:29105"/>
    </ligand>
</feature>
<feature type="binding site" evidence="1">
    <location>
        <position position="245"/>
    </location>
    <ligand>
        <name>Zn(2+)</name>
        <dbReference type="ChEBI" id="CHEBI:29105"/>
    </ligand>
</feature>
<sequence>MDVRQSIHSAHAKTLETQGLRNEFLVEKVFVADEYTMVYSHIDRIIIGGIMPVTKTVSVGGEVGKQLGVSYFLERRELGVINIGGAGTITVDGQCYEIGHRDALYVGKGAKEVVFASIDTGTPAKFYYNCAPAHTTYPTKKVTPDEVSPVTLGDNLTSNRRTINKYFVPDVLETCQLSMGLTELAPGNLWNTMPCHTHERRMEVYFYFNMDDDACVFHMMGQPQETRHIVMHNEQAVISPSWSIHSGVGTKAYTFIWGMVGENQVFDDMDHVAVKDLR</sequence>
<name>KDUI_ECO5E</name>